<organism>
    <name type="scientific">Burkholderia pseudomallei (strain 1710b)</name>
    <dbReference type="NCBI Taxonomy" id="320372"/>
    <lineage>
        <taxon>Bacteria</taxon>
        <taxon>Pseudomonadati</taxon>
        <taxon>Pseudomonadota</taxon>
        <taxon>Betaproteobacteria</taxon>
        <taxon>Burkholderiales</taxon>
        <taxon>Burkholderiaceae</taxon>
        <taxon>Burkholderia</taxon>
        <taxon>pseudomallei group</taxon>
    </lineage>
</organism>
<feature type="chain" id="PRO_0000226379" description="Small ribosomal subunit protein uS12">
    <location>
        <begin position="1"/>
        <end position="126"/>
    </location>
</feature>
<feature type="region of interest" description="Disordered" evidence="3">
    <location>
        <begin position="1"/>
        <end position="26"/>
    </location>
</feature>
<feature type="region of interest" description="Disordered" evidence="3">
    <location>
        <begin position="101"/>
        <end position="126"/>
    </location>
</feature>
<feature type="compositionally biased region" description="Basic residues" evidence="3">
    <location>
        <begin position="113"/>
        <end position="126"/>
    </location>
</feature>
<feature type="modified residue" description="3-methylthioaspartic acid" evidence="1">
    <location>
        <position position="89"/>
    </location>
</feature>
<comment type="function">
    <text evidence="2">With S4 and S5 plays an important role in translational accuracy.</text>
</comment>
<comment type="function">
    <text evidence="2">Interacts with and stabilizes bases of the 16S rRNA that are involved in tRNA selection in the A site and with the mRNA backbone. Located at the interface of the 30S and 50S subunits, it traverses the body of the 30S subunit contacting proteins on the other side and probably holding the rRNA structure together. The combined cluster of proteins S8, S12 and S17 appears to hold together the shoulder and platform of the 30S subunit.</text>
</comment>
<comment type="subunit">
    <text evidence="2">Part of the 30S ribosomal subunit. Contacts proteins S8 and S17. May interact with IF1 in the 30S initiation complex.</text>
</comment>
<comment type="similarity">
    <text evidence="2">Belongs to the universal ribosomal protein uS12 family.</text>
</comment>
<accession>Q3JMQ7</accession>
<dbReference type="EMBL" id="CP000124">
    <property type="protein sequence ID" value="ABA48814.1"/>
    <property type="molecule type" value="Genomic_DNA"/>
</dbReference>
<dbReference type="RefSeq" id="WP_004521903.1">
    <property type="nucleotide sequence ID" value="NC_007434.1"/>
</dbReference>
<dbReference type="SMR" id="Q3JMQ7"/>
<dbReference type="EnsemblBacteria" id="ABA48814">
    <property type="protein sequence ID" value="ABA48814"/>
    <property type="gene ID" value="BURPS1710b_3782"/>
</dbReference>
<dbReference type="GeneID" id="93061837"/>
<dbReference type="KEGG" id="bpm:BURPS1710b_3782"/>
<dbReference type="HOGENOM" id="CLU_104295_1_2_4"/>
<dbReference type="Proteomes" id="UP000002700">
    <property type="component" value="Chromosome I"/>
</dbReference>
<dbReference type="GO" id="GO:0015935">
    <property type="term" value="C:small ribosomal subunit"/>
    <property type="evidence" value="ECO:0007669"/>
    <property type="project" value="InterPro"/>
</dbReference>
<dbReference type="GO" id="GO:0019843">
    <property type="term" value="F:rRNA binding"/>
    <property type="evidence" value="ECO:0007669"/>
    <property type="project" value="UniProtKB-UniRule"/>
</dbReference>
<dbReference type="GO" id="GO:0003735">
    <property type="term" value="F:structural constituent of ribosome"/>
    <property type="evidence" value="ECO:0007669"/>
    <property type="project" value="InterPro"/>
</dbReference>
<dbReference type="GO" id="GO:0000049">
    <property type="term" value="F:tRNA binding"/>
    <property type="evidence" value="ECO:0007669"/>
    <property type="project" value="UniProtKB-UniRule"/>
</dbReference>
<dbReference type="GO" id="GO:0006412">
    <property type="term" value="P:translation"/>
    <property type="evidence" value="ECO:0007669"/>
    <property type="project" value="UniProtKB-UniRule"/>
</dbReference>
<dbReference type="CDD" id="cd03368">
    <property type="entry name" value="Ribosomal_S12"/>
    <property type="match status" value="1"/>
</dbReference>
<dbReference type="FunFam" id="2.40.50.140:FF:000001">
    <property type="entry name" value="30S ribosomal protein S12"/>
    <property type="match status" value="1"/>
</dbReference>
<dbReference type="Gene3D" id="2.40.50.140">
    <property type="entry name" value="Nucleic acid-binding proteins"/>
    <property type="match status" value="1"/>
</dbReference>
<dbReference type="HAMAP" id="MF_00403_B">
    <property type="entry name" value="Ribosomal_uS12_B"/>
    <property type="match status" value="1"/>
</dbReference>
<dbReference type="InterPro" id="IPR012340">
    <property type="entry name" value="NA-bd_OB-fold"/>
</dbReference>
<dbReference type="InterPro" id="IPR006032">
    <property type="entry name" value="Ribosomal_uS12"/>
</dbReference>
<dbReference type="InterPro" id="IPR005679">
    <property type="entry name" value="Ribosomal_uS12_bac"/>
</dbReference>
<dbReference type="NCBIfam" id="TIGR00981">
    <property type="entry name" value="rpsL_bact"/>
    <property type="match status" value="1"/>
</dbReference>
<dbReference type="PANTHER" id="PTHR11652">
    <property type="entry name" value="30S RIBOSOMAL PROTEIN S12 FAMILY MEMBER"/>
    <property type="match status" value="1"/>
</dbReference>
<dbReference type="Pfam" id="PF00164">
    <property type="entry name" value="Ribosom_S12_S23"/>
    <property type="match status" value="1"/>
</dbReference>
<dbReference type="PIRSF" id="PIRSF002133">
    <property type="entry name" value="Ribosomal_S12/S23"/>
    <property type="match status" value="1"/>
</dbReference>
<dbReference type="PRINTS" id="PR01034">
    <property type="entry name" value="RIBOSOMALS12"/>
</dbReference>
<dbReference type="SUPFAM" id="SSF50249">
    <property type="entry name" value="Nucleic acid-binding proteins"/>
    <property type="match status" value="1"/>
</dbReference>
<dbReference type="PROSITE" id="PS00055">
    <property type="entry name" value="RIBOSOMAL_S12"/>
    <property type="match status" value="1"/>
</dbReference>
<sequence>MPTINQLVRKGRASETTKSKSPALQDCPQRRGVCTRVYTTTPKKPNSALRKVAKVRLTNGFEVISYIGGEGHNLQEHSVVLIRGGRVKDLPGVRYHMVRGSLDTQGVKDRKQARSKYGAKRAKAAK</sequence>
<keyword id="KW-0488">Methylation</keyword>
<keyword id="KW-0687">Ribonucleoprotein</keyword>
<keyword id="KW-0689">Ribosomal protein</keyword>
<keyword id="KW-0694">RNA-binding</keyword>
<keyword id="KW-0699">rRNA-binding</keyword>
<keyword id="KW-0820">tRNA-binding</keyword>
<evidence type="ECO:0000250" key="1"/>
<evidence type="ECO:0000255" key="2">
    <source>
        <dbReference type="HAMAP-Rule" id="MF_00403"/>
    </source>
</evidence>
<evidence type="ECO:0000256" key="3">
    <source>
        <dbReference type="SAM" id="MobiDB-lite"/>
    </source>
</evidence>
<evidence type="ECO:0000305" key="4"/>
<protein>
    <recommendedName>
        <fullName evidence="2">Small ribosomal subunit protein uS12</fullName>
    </recommendedName>
    <alternativeName>
        <fullName evidence="4">30S ribosomal protein S12</fullName>
    </alternativeName>
</protein>
<reference key="1">
    <citation type="journal article" date="2010" name="Genome Biol. Evol.">
        <title>Continuing evolution of Burkholderia mallei through genome reduction and large-scale rearrangements.</title>
        <authorList>
            <person name="Losada L."/>
            <person name="Ronning C.M."/>
            <person name="DeShazer D."/>
            <person name="Woods D."/>
            <person name="Fedorova N."/>
            <person name="Kim H.S."/>
            <person name="Shabalina S.A."/>
            <person name="Pearson T.R."/>
            <person name="Brinkac L."/>
            <person name="Tan P."/>
            <person name="Nandi T."/>
            <person name="Crabtree J."/>
            <person name="Badger J."/>
            <person name="Beckstrom-Sternberg S."/>
            <person name="Saqib M."/>
            <person name="Schutzer S.E."/>
            <person name="Keim P."/>
            <person name="Nierman W.C."/>
        </authorList>
    </citation>
    <scope>NUCLEOTIDE SEQUENCE [LARGE SCALE GENOMIC DNA]</scope>
    <source>
        <strain>1710b</strain>
    </source>
</reference>
<name>RS12_BURP1</name>
<proteinExistence type="inferred from homology"/>
<gene>
    <name evidence="2" type="primary">rpsL</name>
    <name type="ordered locus">BURPS1710b_3782</name>
</gene>